<evidence type="ECO:0000255" key="1">
    <source>
        <dbReference type="HAMAP-Rule" id="MF_01005"/>
    </source>
</evidence>
<comment type="function">
    <text evidence="1">Part of the ABC transporter complex BtuCDF involved in vitamin B12 import. Responsible for energy coupling to the transport system.</text>
</comment>
<comment type="catalytic activity">
    <reaction evidence="1">
        <text>an R-cob(III)alamin(out) + ATP + H2O = an R-cob(III)alamin(in) + ADP + phosphate + H(+)</text>
        <dbReference type="Rhea" id="RHEA:17873"/>
        <dbReference type="ChEBI" id="CHEBI:15377"/>
        <dbReference type="ChEBI" id="CHEBI:15378"/>
        <dbReference type="ChEBI" id="CHEBI:30616"/>
        <dbReference type="ChEBI" id="CHEBI:43474"/>
        <dbReference type="ChEBI" id="CHEBI:140785"/>
        <dbReference type="ChEBI" id="CHEBI:456216"/>
        <dbReference type="EC" id="7.6.2.8"/>
    </reaction>
</comment>
<comment type="subunit">
    <text evidence="1">The complex is composed of two ATP-binding proteins (BtuD), two transmembrane proteins (BtuC) and a solute-binding protein (BtuF).</text>
</comment>
<comment type="subcellular location">
    <subcellularLocation>
        <location evidence="1">Cell inner membrane</location>
        <topology evidence="1">Peripheral membrane protein</topology>
    </subcellularLocation>
</comment>
<comment type="similarity">
    <text evidence="1">Belongs to the ABC transporter superfamily. Vitamin B12 importer (TC 3.A.1.13.1) family.</text>
</comment>
<organism>
    <name type="scientific">Escherichia coli O6:K15:H31 (strain 536 / UPEC)</name>
    <dbReference type="NCBI Taxonomy" id="362663"/>
    <lineage>
        <taxon>Bacteria</taxon>
        <taxon>Pseudomonadati</taxon>
        <taxon>Pseudomonadota</taxon>
        <taxon>Gammaproteobacteria</taxon>
        <taxon>Enterobacterales</taxon>
        <taxon>Enterobacteriaceae</taxon>
        <taxon>Escherichia</taxon>
    </lineage>
</organism>
<sequence>MSIVMQLQDVAESTRLGPLSGEVRAGEILHLVGPNGAGKSTLLARMAGMTSGKGSIQFAGQPLEAWSATKLALHRAYLSQQQTPPFAMPVWHYLTLHQHDKTRTELLNDVAGALALDDKLGRSTNQLSGGEWQRVRLAAVVLQITPQANPAGQLLLLDEPMNSLDVAQQSALDKILSALCQQGLAIVMSSHDLNHTLRHAHRAWLLKGGKMLASGRREEVLTPANLAQAYGMNFRRLDIEGHRMLISTI</sequence>
<protein>
    <recommendedName>
        <fullName evidence="1">Vitamin B12 import ATP-binding protein BtuD</fullName>
        <ecNumber evidence="1">7.6.2.8</ecNumber>
    </recommendedName>
    <alternativeName>
        <fullName evidence="1">Vitamin B12-transporting ATPase</fullName>
    </alternativeName>
</protein>
<accession>Q0THB9</accession>
<dbReference type="EC" id="7.6.2.8" evidence="1"/>
<dbReference type="EMBL" id="CP000247">
    <property type="protein sequence ID" value="ABG69660.1"/>
    <property type="molecule type" value="Genomic_DNA"/>
</dbReference>
<dbReference type="RefSeq" id="WP_000029464.1">
    <property type="nucleotide sequence ID" value="NC_008253.1"/>
</dbReference>
<dbReference type="SMR" id="Q0THB9"/>
<dbReference type="KEGG" id="ecp:ECP_1657"/>
<dbReference type="HOGENOM" id="CLU_000604_1_11_6"/>
<dbReference type="Proteomes" id="UP000009182">
    <property type="component" value="Chromosome"/>
</dbReference>
<dbReference type="GO" id="GO:0005886">
    <property type="term" value="C:plasma membrane"/>
    <property type="evidence" value="ECO:0007669"/>
    <property type="project" value="UniProtKB-SubCell"/>
</dbReference>
<dbReference type="GO" id="GO:0015420">
    <property type="term" value="F:ABC-type vitamin B12 transporter activity"/>
    <property type="evidence" value="ECO:0007669"/>
    <property type="project" value="UniProtKB-UniRule"/>
</dbReference>
<dbReference type="GO" id="GO:0005524">
    <property type="term" value="F:ATP binding"/>
    <property type="evidence" value="ECO:0007669"/>
    <property type="project" value="UniProtKB-KW"/>
</dbReference>
<dbReference type="GO" id="GO:0016887">
    <property type="term" value="F:ATP hydrolysis activity"/>
    <property type="evidence" value="ECO:0007669"/>
    <property type="project" value="InterPro"/>
</dbReference>
<dbReference type="CDD" id="cd03214">
    <property type="entry name" value="ABC_Iron-Siderophores_B12_Hemin"/>
    <property type="match status" value="1"/>
</dbReference>
<dbReference type="FunFam" id="3.40.50.300:FF:000462">
    <property type="entry name" value="Vitamin B12 import ATP-binding protein BtuD"/>
    <property type="match status" value="1"/>
</dbReference>
<dbReference type="Gene3D" id="3.40.50.300">
    <property type="entry name" value="P-loop containing nucleotide triphosphate hydrolases"/>
    <property type="match status" value="1"/>
</dbReference>
<dbReference type="HAMAP" id="MF_01005">
    <property type="entry name" value="BtuD"/>
    <property type="match status" value="1"/>
</dbReference>
<dbReference type="InterPro" id="IPR003593">
    <property type="entry name" value="AAA+_ATPase"/>
</dbReference>
<dbReference type="InterPro" id="IPR003439">
    <property type="entry name" value="ABC_transporter-like_ATP-bd"/>
</dbReference>
<dbReference type="InterPro" id="IPR017871">
    <property type="entry name" value="ABC_transporter-like_CS"/>
</dbReference>
<dbReference type="InterPro" id="IPR023693">
    <property type="entry name" value="ABC_transptr_BtuD"/>
</dbReference>
<dbReference type="InterPro" id="IPR050153">
    <property type="entry name" value="Metal_Ion_Import_ABC"/>
</dbReference>
<dbReference type="InterPro" id="IPR027417">
    <property type="entry name" value="P-loop_NTPase"/>
</dbReference>
<dbReference type="NCBIfam" id="NF002981">
    <property type="entry name" value="PRK03695.1"/>
    <property type="match status" value="1"/>
</dbReference>
<dbReference type="PANTHER" id="PTHR42734">
    <property type="entry name" value="METAL TRANSPORT SYSTEM ATP-BINDING PROTEIN TM_0124-RELATED"/>
    <property type="match status" value="1"/>
</dbReference>
<dbReference type="PANTHER" id="PTHR42734:SF18">
    <property type="entry name" value="VITAMIN B12 IMPORT ATP-BINDING PROTEIN BTUD"/>
    <property type="match status" value="1"/>
</dbReference>
<dbReference type="Pfam" id="PF00005">
    <property type="entry name" value="ABC_tran"/>
    <property type="match status" value="1"/>
</dbReference>
<dbReference type="SMART" id="SM00382">
    <property type="entry name" value="AAA"/>
    <property type="match status" value="1"/>
</dbReference>
<dbReference type="SUPFAM" id="SSF52540">
    <property type="entry name" value="P-loop containing nucleoside triphosphate hydrolases"/>
    <property type="match status" value="1"/>
</dbReference>
<dbReference type="PROSITE" id="PS00211">
    <property type="entry name" value="ABC_TRANSPORTER_1"/>
    <property type="match status" value="1"/>
</dbReference>
<dbReference type="PROSITE" id="PS50893">
    <property type="entry name" value="ABC_TRANSPORTER_2"/>
    <property type="match status" value="1"/>
</dbReference>
<name>BTUD_ECOL5</name>
<reference key="1">
    <citation type="journal article" date="2006" name="Mol. Microbiol.">
        <title>Role of pathogenicity island-associated integrases in the genome plasticity of uropathogenic Escherichia coli strain 536.</title>
        <authorList>
            <person name="Hochhut B."/>
            <person name="Wilde C."/>
            <person name="Balling G."/>
            <person name="Middendorf B."/>
            <person name="Dobrindt U."/>
            <person name="Brzuszkiewicz E."/>
            <person name="Gottschalk G."/>
            <person name="Carniel E."/>
            <person name="Hacker J."/>
        </authorList>
    </citation>
    <scope>NUCLEOTIDE SEQUENCE [LARGE SCALE GENOMIC DNA]</scope>
    <source>
        <strain>536 / UPEC</strain>
    </source>
</reference>
<feature type="chain" id="PRO_1000083962" description="Vitamin B12 import ATP-binding protein BtuD">
    <location>
        <begin position="1"/>
        <end position="249"/>
    </location>
</feature>
<feature type="domain" description="ABC transporter" evidence="1">
    <location>
        <begin position="1"/>
        <end position="233"/>
    </location>
</feature>
<feature type="binding site" evidence="1">
    <location>
        <begin position="33"/>
        <end position="40"/>
    </location>
    <ligand>
        <name>ATP</name>
        <dbReference type="ChEBI" id="CHEBI:30616"/>
    </ligand>
</feature>
<proteinExistence type="inferred from homology"/>
<keyword id="KW-0067">ATP-binding</keyword>
<keyword id="KW-0997">Cell inner membrane</keyword>
<keyword id="KW-1003">Cell membrane</keyword>
<keyword id="KW-0472">Membrane</keyword>
<keyword id="KW-0547">Nucleotide-binding</keyword>
<keyword id="KW-1278">Translocase</keyword>
<keyword id="KW-0813">Transport</keyword>
<gene>
    <name evidence="1" type="primary">btuD</name>
    <name type="ordered locus">ECP_1657</name>
</gene>